<name>ISPD_ECOLC</name>
<proteinExistence type="inferred from homology"/>
<organism>
    <name type="scientific">Escherichia coli (strain ATCC 8739 / DSM 1576 / NBRC 3972 / NCIMB 8545 / WDCM 00012 / Crooks)</name>
    <dbReference type="NCBI Taxonomy" id="481805"/>
    <lineage>
        <taxon>Bacteria</taxon>
        <taxon>Pseudomonadati</taxon>
        <taxon>Pseudomonadota</taxon>
        <taxon>Gammaproteobacteria</taxon>
        <taxon>Enterobacterales</taxon>
        <taxon>Enterobacteriaceae</taxon>
        <taxon>Escherichia</taxon>
    </lineage>
</organism>
<comment type="function">
    <text evidence="1">Catalyzes the formation of 4-diphosphocytidyl-2-C-methyl-D-erythritol from CTP and 2-C-methyl-D-erythritol 4-phosphate (MEP).</text>
</comment>
<comment type="catalytic activity">
    <reaction evidence="1">
        <text>2-C-methyl-D-erythritol 4-phosphate + CTP + H(+) = 4-CDP-2-C-methyl-D-erythritol + diphosphate</text>
        <dbReference type="Rhea" id="RHEA:13429"/>
        <dbReference type="ChEBI" id="CHEBI:15378"/>
        <dbReference type="ChEBI" id="CHEBI:33019"/>
        <dbReference type="ChEBI" id="CHEBI:37563"/>
        <dbReference type="ChEBI" id="CHEBI:57823"/>
        <dbReference type="ChEBI" id="CHEBI:58262"/>
        <dbReference type="EC" id="2.7.7.60"/>
    </reaction>
</comment>
<comment type="pathway">
    <text evidence="1">Isoprenoid biosynthesis; isopentenyl diphosphate biosynthesis via DXP pathway; isopentenyl diphosphate from 1-deoxy-D-xylulose 5-phosphate: step 2/6.</text>
</comment>
<comment type="subunit">
    <text evidence="1">Homodimer.</text>
</comment>
<comment type="similarity">
    <text evidence="1">Belongs to the IspD/TarI cytidylyltransferase family. IspD subfamily.</text>
</comment>
<keyword id="KW-0414">Isoprene biosynthesis</keyword>
<keyword id="KW-0548">Nucleotidyltransferase</keyword>
<keyword id="KW-0808">Transferase</keyword>
<evidence type="ECO:0000255" key="1">
    <source>
        <dbReference type="HAMAP-Rule" id="MF_00108"/>
    </source>
</evidence>
<protein>
    <recommendedName>
        <fullName evidence="1">2-C-methyl-D-erythritol 4-phosphate cytidylyltransferase</fullName>
        <ecNumber evidence="1">2.7.7.60</ecNumber>
    </recommendedName>
    <alternativeName>
        <fullName evidence="1">4-diphosphocytidyl-2C-methyl-D-erythritol synthase</fullName>
    </alternativeName>
    <alternativeName>
        <fullName evidence="1">MEP cytidylyltransferase</fullName>
        <shortName evidence="1">MCT</shortName>
    </alternativeName>
</protein>
<feature type="chain" id="PRO_1000075933" description="2-C-methyl-D-erythritol 4-phosphate cytidylyltransferase">
    <location>
        <begin position="1"/>
        <end position="236"/>
    </location>
</feature>
<feature type="site" description="Transition state stabilizer" evidence="1">
    <location>
        <position position="20"/>
    </location>
</feature>
<feature type="site" description="Transition state stabilizer" evidence="1">
    <location>
        <position position="27"/>
    </location>
</feature>
<feature type="site" description="Positions MEP for the nucleophilic attack" evidence="1">
    <location>
        <position position="157"/>
    </location>
</feature>
<feature type="site" description="Positions MEP for the nucleophilic attack" evidence="1">
    <location>
        <position position="213"/>
    </location>
</feature>
<gene>
    <name evidence="1" type="primary">ispD</name>
    <name type="ordered locus">EcolC_0965</name>
</gene>
<reference key="1">
    <citation type="submission" date="2008-02" db="EMBL/GenBank/DDBJ databases">
        <title>Complete sequence of Escherichia coli C str. ATCC 8739.</title>
        <authorList>
            <person name="Copeland A."/>
            <person name="Lucas S."/>
            <person name="Lapidus A."/>
            <person name="Glavina del Rio T."/>
            <person name="Dalin E."/>
            <person name="Tice H."/>
            <person name="Bruce D."/>
            <person name="Goodwin L."/>
            <person name="Pitluck S."/>
            <person name="Kiss H."/>
            <person name="Brettin T."/>
            <person name="Detter J.C."/>
            <person name="Han C."/>
            <person name="Kuske C.R."/>
            <person name="Schmutz J."/>
            <person name="Larimer F."/>
            <person name="Land M."/>
            <person name="Hauser L."/>
            <person name="Kyrpides N."/>
            <person name="Mikhailova N."/>
            <person name="Ingram L."/>
            <person name="Richardson P."/>
        </authorList>
    </citation>
    <scope>NUCLEOTIDE SEQUENCE [LARGE SCALE GENOMIC DNA]</scope>
    <source>
        <strain>ATCC 8739 / DSM 1576 / NBRC 3972 / NCIMB 8545 / WDCM 00012 / Crooks</strain>
    </source>
</reference>
<dbReference type="EC" id="2.7.7.60" evidence="1"/>
<dbReference type="EMBL" id="CP000946">
    <property type="protein sequence ID" value="ACA76634.1"/>
    <property type="molecule type" value="Genomic_DNA"/>
</dbReference>
<dbReference type="RefSeq" id="WP_000246138.1">
    <property type="nucleotide sequence ID" value="NZ_MTFT01000049.1"/>
</dbReference>
<dbReference type="SMR" id="B1IUT2"/>
<dbReference type="GeneID" id="93779259"/>
<dbReference type="KEGG" id="ecl:EcolC_0965"/>
<dbReference type="HOGENOM" id="CLU_061281_3_1_6"/>
<dbReference type="UniPathway" id="UPA00056">
    <property type="reaction ID" value="UER00093"/>
</dbReference>
<dbReference type="GO" id="GO:0050518">
    <property type="term" value="F:2-C-methyl-D-erythritol 4-phosphate cytidylyltransferase activity"/>
    <property type="evidence" value="ECO:0007669"/>
    <property type="project" value="UniProtKB-UniRule"/>
</dbReference>
<dbReference type="GO" id="GO:0019288">
    <property type="term" value="P:isopentenyl diphosphate biosynthetic process, methylerythritol 4-phosphate pathway"/>
    <property type="evidence" value="ECO:0007669"/>
    <property type="project" value="UniProtKB-UniRule"/>
</dbReference>
<dbReference type="CDD" id="cd02516">
    <property type="entry name" value="CDP-ME_synthetase"/>
    <property type="match status" value="1"/>
</dbReference>
<dbReference type="FunFam" id="3.90.550.10:FF:000003">
    <property type="entry name" value="2-C-methyl-D-erythritol 4-phosphate cytidylyltransferase"/>
    <property type="match status" value="1"/>
</dbReference>
<dbReference type="Gene3D" id="3.90.550.10">
    <property type="entry name" value="Spore Coat Polysaccharide Biosynthesis Protein SpsA, Chain A"/>
    <property type="match status" value="1"/>
</dbReference>
<dbReference type="HAMAP" id="MF_00108">
    <property type="entry name" value="IspD"/>
    <property type="match status" value="1"/>
</dbReference>
<dbReference type="InterPro" id="IPR001228">
    <property type="entry name" value="IspD"/>
</dbReference>
<dbReference type="InterPro" id="IPR034683">
    <property type="entry name" value="IspD/TarI"/>
</dbReference>
<dbReference type="InterPro" id="IPR050088">
    <property type="entry name" value="IspD/TarI_cytidylyltransf_bact"/>
</dbReference>
<dbReference type="InterPro" id="IPR018294">
    <property type="entry name" value="ISPD_synthase_CS"/>
</dbReference>
<dbReference type="InterPro" id="IPR029044">
    <property type="entry name" value="Nucleotide-diphossugar_trans"/>
</dbReference>
<dbReference type="NCBIfam" id="TIGR00453">
    <property type="entry name" value="ispD"/>
    <property type="match status" value="1"/>
</dbReference>
<dbReference type="PANTHER" id="PTHR32125">
    <property type="entry name" value="2-C-METHYL-D-ERYTHRITOL 4-PHOSPHATE CYTIDYLYLTRANSFERASE, CHLOROPLASTIC"/>
    <property type="match status" value="1"/>
</dbReference>
<dbReference type="PANTHER" id="PTHR32125:SF4">
    <property type="entry name" value="2-C-METHYL-D-ERYTHRITOL 4-PHOSPHATE CYTIDYLYLTRANSFERASE, CHLOROPLASTIC"/>
    <property type="match status" value="1"/>
</dbReference>
<dbReference type="Pfam" id="PF01128">
    <property type="entry name" value="IspD"/>
    <property type="match status" value="1"/>
</dbReference>
<dbReference type="SUPFAM" id="SSF53448">
    <property type="entry name" value="Nucleotide-diphospho-sugar transferases"/>
    <property type="match status" value="1"/>
</dbReference>
<dbReference type="PROSITE" id="PS01295">
    <property type="entry name" value="ISPD"/>
    <property type="match status" value="1"/>
</dbReference>
<sequence length="236" mass="25737">MATTHLDVCAVVPAAGFGRRMQTECPKQYLSIGNQTILEHSVHALLAHPRVKRVVIAISPGDSRFAQLPLANHPQITVVDGGDERADSVLAGLKAAGDAQWVLVHDAARPCLHQDDLARLLALSETSRTGGILAAPVRDTMKRAEPGKNAIAHTVDRNGLWHALTPQFFPRELLHDCLTRALNEGATITDEASALEYCGFHPQLVEGRADNIKVTRPEDLALAEFYLTRTIHQENT</sequence>
<accession>B1IUT2</accession>